<name>SYL_COXBU</name>
<accession>Q83DY1</accession>
<comment type="catalytic activity">
    <reaction evidence="1">
        <text>tRNA(Leu) + L-leucine + ATP = L-leucyl-tRNA(Leu) + AMP + diphosphate</text>
        <dbReference type="Rhea" id="RHEA:11688"/>
        <dbReference type="Rhea" id="RHEA-COMP:9613"/>
        <dbReference type="Rhea" id="RHEA-COMP:9622"/>
        <dbReference type="ChEBI" id="CHEBI:30616"/>
        <dbReference type="ChEBI" id="CHEBI:33019"/>
        <dbReference type="ChEBI" id="CHEBI:57427"/>
        <dbReference type="ChEBI" id="CHEBI:78442"/>
        <dbReference type="ChEBI" id="CHEBI:78494"/>
        <dbReference type="ChEBI" id="CHEBI:456215"/>
        <dbReference type="EC" id="6.1.1.4"/>
    </reaction>
</comment>
<comment type="subcellular location">
    <subcellularLocation>
        <location evidence="1">Cytoplasm</location>
    </subcellularLocation>
</comment>
<comment type="similarity">
    <text evidence="1">Belongs to the class-I aminoacyl-tRNA synthetase family.</text>
</comment>
<protein>
    <recommendedName>
        <fullName evidence="1">Leucine--tRNA ligase</fullName>
        <ecNumber evidence="1">6.1.1.4</ecNumber>
    </recommendedName>
    <alternativeName>
        <fullName evidence="1">Leucyl-tRNA synthetase</fullName>
        <shortName evidence="1">LeuRS</shortName>
    </alternativeName>
</protein>
<dbReference type="EC" id="6.1.1.4" evidence="1"/>
<dbReference type="EMBL" id="AE016828">
    <property type="protein sequence ID" value="AAO90104.1"/>
    <property type="molecule type" value="Genomic_DNA"/>
</dbReference>
<dbReference type="RefSeq" id="NP_819590.1">
    <property type="nucleotide sequence ID" value="NC_002971.4"/>
</dbReference>
<dbReference type="RefSeq" id="WP_010957661.1">
    <property type="nucleotide sequence ID" value="NC_002971.4"/>
</dbReference>
<dbReference type="SMR" id="Q83DY1"/>
<dbReference type="STRING" id="227377.CBU_0559"/>
<dbReference type="DNASU" id="1208444"/>
<dbReference type="EnsemblBacteria" id="AAO90104">
    <property type="protein sequence ID" value="AAO90104"/>
    <property type="gene ID" value="CBU_0559"/>
</dbReference>
<dbReference type="GeneID" id="1208444"/>
<dbReference type="KEGG" id="cbu:CBU_0559"/>
<dbReference type="PATRIC" id="fig|227377.7.peg.554"/>
<dbReference type="eggNOG" id="COG0495">
    <property type="taxonomic scope" value="Bacteria"/>
</dbReference>
<dbReference type="HOGENOM" id="CLU_004427_0_0_6"/>
<dbReference type="OrthoDB" id="9810365at2"/>
<dbReference type="Proteomes" id="UP000002671">
    <property type="component" value="Chromosome"/>
</dbReference>
<dbReference type="GO" id="GO:0005829">
    <property type="term" value="C:cytosol"/>
    <property type="evidence" value="ECO:0000318"/>
    <property type="project" value="GO_Central"/>
</dbReference>
<dbReference type="GO" id="GO:0002161">
    <property type="term" value="F:aminoacyl-tRNA deacylase activity"/>
    <property type="evidence" value="ECO:0007669"/>
    <property type="project" value="InterPro"/>
</dbReference>
<dbReference type="GO" id="GO:0005524">
    <property type="term" value="F:ATP binding"/>
    <property type="evidence" value="ECO:0007669"/>
    <property type="project" value="UniProtKB-UniRule"/>
</dbReference>
<dbReference type="GO" id="GO:0004823">
    <property type="term" value="F:leucine-tRNA ligase activity"/>
    <property type="evidence" value="ECO:0000318"/>
    <property type="project" value="GO_Central"/>
</dbReference>
<dbReference type="GO" id="GO:0006429">
    <property type="term" value="P:leucyl-tRNA aminoacylation"/>
    <property type="evidence" value="ECO:0000318"/>
    <property type="project" value="GO_Central"/>
</dbReference>
<dbReference type="CDD" id="cd07958">
    <property type="entry name" value="Anticodon_Ia_Leu_BEm"/>
    <property type="match status" value="1"/>
</dbReference>
<dbReference type="CDD" id="cd00812">
    <property type="entry name" value="LeuRS_core"/>
    <property type="match status" value="1"/>
</dbReference>
<dbReference type="FunFam" id="1.10.730.10:FF:000003">
    <property type="entry name" value="Leucine--tRNA ligase"/>
    <property type="match status" value="1"/>
</dbReference>
<dbReference type="FunFam" id="3.10.20.590:FF:000001">
    <property type="entry name" value="Leucine--tRNA ligase"/>
    <property type="match status" value="1"/>
</dbReference>
<dbReference type="FunFam" id="3.40.50.620:FF:000056">
    <property type="entry name" value="Leucine--tRNA ligase"/>
    <property type="match status" value="1"/>
</dbReference>
<dbReference type="FunFam" id="3.40.50.620:FF:000395">
    <property type="entry name" value="Leucine--tRNA ligase"/>
    <property type="match status" value="1"/>
</dbReference>
<dbReference type="FunFam" id="3.90.740.10:FF:000012">
    <property type="entry name" value="Leucine--tRNA ligase"/>
    <property type="match status" value="1"/>
</dbReference>
<dbReference type="Gene3D" id="3.10.20.590">
    <property type="match status" value="1"/>
</dbReference>
<dbReference type="Gene3D" id="3.40.50.620">
    <property type="entry name" value="HUPs"/>
    <property type="match status" value="2"/>
</dbReference>
<dbReference type="Gene3D" id="1.10.730.10">
    <property type="entry name" value="Isoleucyl-tRNA Synthetase, Domain 1"/>
    <property type="match status" value="1"/>
</dbReference>
<dbReference type="Gene3D" id="3.90.740.10">
    <property type="entry name" value="Valyl/Leucyl/Isoleucyl-tRNA synthetase, editing domain"/>
    <property type="match status" value="1"/>
</dbReference>
<dbReference type="HAMAP" id="MF_00049_B">
    <property type="entry name" value="Leu_tRNA_synth_B"/>
    <property type="match status" value="1"/>
</dbReference>
<dbReference type="InterPro" id="IPR001412">
    <property type="entry name" value="aa-tRNA-synth_I_CS"/>
</dbReference>
<dbReference type="InterPro" id="IPR002300">
    <property type="entry name" value="aa-tRNA-synth_Ia"/>
</dbReference>
<dbReference type="InterPro" id="IPR002302">
    <property type="entry name" value="Leu-tRNA-ligase"/>
</dbReference>
<dbReference type="InterPro" id="IPR025709">
    <property type="entry name" value="Leu_tRNA-synth_edit"/>
</dbReference>
<dbReference type="InterPro" id="IPR013155">
    <property type="entry name" value="M/V/L/I-tRNA-synth_anticd-bd"/>
</dbReference>
<dbReference type="InterPro" id="IPR015413">
    <property type="entry name" value="Methionyl/Leucyl_tRNA_Synth"/>
</dbReference>
<dbReference type="InterPro" id="IPR014729">
    <property type="entry name" value="Rossmann-like_a/b/a_fold"/>
</dbReference>
<dbReference type="InterPro" id="IPR009080">
    <property type="entry name" value="tRNAsynth_Ia_anticodon-bd"/>
</dbReference>
<dbReference type="InterPro" id="IPR009008">
    <property type="entry name" value="Val/Leu/Ile-tRNA-synth_edit"/>
</dbReference>
<dbReference type="NCBIfam" id="TIGR00396">
    <property type="entry name" value="leuS_bact"/>
    <property type="match status" value="1"/>
</dbReference>
<dbReference type="PANTHER" id="PTHR43740:SF2">
    <property type="entry name" value="LEUCINE--TRNA LIGASE, MITOCHONDRIAL"/>
    <property type="match status" value="1"/>
</dbReference>
<dbReference type="PANTHER" id="PTHR43740">
    <property type="entry name" value="LEUCYL-TRNA SYNTHETASE"/>
    <property type="match status" value="1"/>
</dbReference>
<dbReference type="Pfam" id="PF08264">
    <property type="entry name" value="Anticodon_1"/>
    <property type="match status" value="1"/>
</dbReference>
<dbReference type="Pfam" id="PF00133">
    <property type="entry name" value="tRNA-synt_1"/>
    <property type="match status" value="1"/>
</dbReference>
<dbReference type="Pfam" id="PF13603">
    <property type="entry name" value="tRNA-synt_1_2"/>
    <property type="match status" value="1"/>
</dbReference>
<dbReference type="Pfam" id="PF09334">
    <property type="entry name" value="tRNA-synt_1g"/>
    <property type="match status" value="1"/>
</dbReference>
<dbReference type="PRINTS" id="PR00985">
    <property type="entry name" value="TRNASYNTHLEU"/>
</dbReference>
<dbReference type="SUPFAM" id="SSF47323">
    <property type="entry name" value="Anticodon-binding domain of a subclass of class I aminoacyl-tRNA synthetases"/>
    <property type="match status" value="1"/>
</dbReference>
<dbReference type="SUPFAM" id="SSF52374">
    <property type="entry name" value="Nucleotidylyl transferase"/>
    <property type="match status" value="1"/>
</dbReference>
<dbReference type="SUPFAM" id="SSF50677">
    <property type="entry name" value="ValRS/IleRS/LeuRS editing domain"/>
    <property type="match status" value="1"/>
</dbReference>
<dbReference type="PROSITE" id="PS00178">
    <property type="entry name" value="AA_TRNA_LIGASE_I"/>
    <property type="match status" value="1"/>
</dbReference>
<gene>
    <name evidence="1" type="primary">leuS</name>
    <name type="ordered locus">CBU_0559</name>
</gene>
<sequence>MNESYQPTLIEQLAQEYWEENETFEVKEDLSREKFYCLSMLPYPSGDLHMGHVRNYTIGDVIARYQIHKGRNVLQPMGWDAFGLPAENAAIQRELPPAEWTRKNIKKMRKQLKQLGFAYDWSREITTCDSTYYRWEQWLFLQLYKKGLAYKKNAIVNWDPVDQTVLANEQIVDGRGWRSGAVVERREISQWFLKITDYSEELLKDLDELKEWPEQVITMQRNWIGQSQGVIINFNLEKGPDKLQVYTTRPDTLMGVTYLAIAPEHPLAKERAKKSKKIAAFLKKCKQTRVAEADIATQEKEGIDSGLFAVHPLSKEKLPIWIANFVLMEYASGVVMAVPAHDERDHEFALKYDLPLKPVIEPADGHDWDYNQAAYTNPGKLINSGSFNDIDSKTAFNVIADYLKNNGAGSRQTHYRLRDWGISRQRYWGTPIPIIYCKTCGTVPVPENQLPVLLPEDIIPTGHGSPLKETASFYKTRCPVCNKPATRETDTMDTFVESSWYYARYSCPDQDKVMLDDRAKYWTPVDQYIGGIEHAVMHLLYARFMHKILRDLGLLNSNEPFIRLLTQGMVLKDGAKMSKSKGNVVTPQSLIKKYGADTVRLFIIFAAPPEQDLEWSDSGVEGAYRFLKKLWGFSYRIKDALLAINQQKERSNYQWEAPEHRQTRQQIHECLQQANIDMERLQFNTVVSAVMKILNILIKLTTDNDAEAHLIREGTGILLRLLSPITPHISHHLWQSLGFGGDILDTPWPRPDPKALQTTELELIVQINGKLRGRIQVPTEASKEIIESTALNQENVQRHLADKKIKKVIVVPKKLINIVV</sequence>
<organism>
    <name type="scientific">Coxiella burnetii (strain RSA 493 / Nine Mile phase I)</name>
    <dbReference type="NCBI Taxonomy" id="227377"/>
    <lineage>
        <taxon>Bacteria</taxon>
        <taxon>Pseudomonadati</taxon>
        <taxon>Pseudomonadota</taxon>
        <taxon>Gammaproteobacteria</taxon>
        <taxon>Legionellales</taxon>
        <taxon>Coxiellaceae</taxon>
        <taxon>Coxiella</taxon>
    </lineage>
</organism>
<feature type="chain" id="PRO_0000152008" description="Leucine--tRNA ligase">
    <location>
        <begin position="1"/>
        <end position="820"/>
    </location>
</feature>
<feature type="short sequence motif" description="'HIGH' region">
    <location>
        <begin position="42"/>
        <end position="52"/>
    </location>
</feature>
<feature type="short sequence motif" description="'KMSKS' region">
    <location>
        <begin position="576"/>
        <end position="580"/>
    </location>
</feature>
<feature type="binding site" evidence="1">
    <location>
        <position position="579"/>
    </location>
    <ligand>
        <name>ATP</name>
        <dbReference type="ChEBI" id="CHEBI:30616"/>
    </ligand>
</feature>
<proteinExistence type="inferred from homology"/>
<reference key="1">
    <citation type="journal article" date="2003" name="Proc. Natl. Acad. Sci. U.S.A.">
        <title>Complete genome sequence of the Q-fever pathogen, Coxiella burnetii.</title>
        <authorList>
            <person name="Seshadri R."/>
            <person name="Paulsen I.T."/>
            <person name="Eisen J.A."/>
            <person name="Read T.D."/>
            <person name="Nelson K.E."/>
            <person name="Nelson W.C."/>
            <person name="Ward N.L."/>
            <person name="Tettelin H."/>
            <person name="Davidsen T.M."/>
            <person name="Beanan M.J."/>
            <person name="DeBoy R.T."/>
            <person name="Daugherty S.C."/>
            <person name="Brinkac L.M."/>
            <person name="Madupu R."/>
            <person name="Dodson R.J."/>
            <person name="Khouri H.M."/>
            <person name="Lee K.H."/>
            <person name="Carty H.A."/>
            <person name="Scanlan D."/>
            <person name="Heinzen R.A."/>
            <person name="Thompson H.A."/>
            <person name="Samuel J.E."/>
            <person name="Fraser C.M."/>
            <person name="Heidelberg J.F."/>
        </authorList>
    </citation>
    <scope>NUCLEOTIDE SEQUENCE [LARGE SCALE GENOMIC DNA]</scope>
    <source>
        <strain>RSA 493 / Nine Mile phase I</strain>
    </source>
</reference>
<evidence type="ECO:0000255" key="1">
    <source>
        <dbReference type="HAMAP-Rule" id="MF_00049"/>
    </source>
</evidence>
<keyword id="KW-0030">Aminoacyl-tRNA synthetase</keyword>
<keyword id="KW-0067">ATP-binding</keyword>
<keyword id="KW-0963">Cytoplasm</keyword>
<keyword id="KW-0436">Ligase</keyword>
<keyword id="KW-0547">Nucleotide-binding</keyword>
<keyword id="KW-0648">Protein biosynthesis</keyword>
<keyword id="KW-1185">Reference proteome</keyword>